<reference key="1">
    <citation type="journal article" date="2005" name="Science">
        <title>Life at depth: Photobacterium profundum genome sequence and expression analysis.</title>
        <authorList>
            <person name="Vezzi A."/>
            <person name="Campanaro S."/>
            <person name="D'Angelo M."/>
            <person name="Simonato F."/>
            <person name="Vitulo N."/>
            <person name="Lauro F.M."/>
            <person name="Cestaro A."/>
            <person name="Malacrida G."/>
            <person name="Simionati B."/>
            <person name="Cannata N."/>
            <person name="Romualdi C."/>
            <person name="Bartlett D.H."/>
            <person name="Valle G."/>
        </authorList>
    </citation>
    <scope>NUCLEOTIDE SEQUENCE [LARGE SCALE GENOMIC DNA]</scope>
    <source>
        <strain>ATCC BAA-1253 / SS9</strain>
    </source>
</reference>
<evidence type="ECO:0000255" key="1">
    <source>
        <dbReference type="HAMAP-Rule" id="MF_00126"/>
    </source>
</evidence>
<name>SYQ_PHOPR</name>
<protein>
    <recommendedName>
        <fullName evidence="1">Glutamine--tRNA ligase</fullName>
        <ecNumber evidence="1">6.1.1.18</ecNumber>
    </recommendedName>
    <alternativeName>
        <fullName evidence="1">Glutaminyl-tRNA synthetase</fullName>
        <shortName evidence="1">GlnRS</shortName>
    </alternativeName>
</protein>
<feature type="chain" id="PRO_0000242872" description="Glutamine--tRNA ligase">
    <location>
        <begin position="1"/>
        <end position="555"/>
    </location>
</feature>
<feature type="short sequence motif" description="'HIGH' region" evidence="1">
    <location>
        <begin position="35"/>
        <end position="45"/>
    </location>
</feature>
<feature type="short sequence motif" description="'KMSKS' region" evidence="1">
    <location>
        <begin position="269"/>
        <end position="273"/>
    </location>
</feature>
<feature type="binding site" evidence="1">
    <location>
        <begin position="36"/>
        <end position="38"/>
    </location>
    <ligand>
        <name>ATP</name>
        <dbReference type="ChEBI" id="CHEBI:30616"/>
    </ligand>
</feature>
<feature type="binding site" evidence="1">
    <location>
        <begin position="42"/>
        <end position="48"/>
    </location>
    <ligand>
        <name>ATP</name>
        <dbReference type="ChEBI" id="CHEBI:30616"/>
    </ligand>
</feature>
<feature type="binding site" evidence="1">
    <location>
        <position position="68"/>
    </location>
    <ligand>
        <name>L-glutamine</name>
        <dbReference type="ChEBI" id="CHEBI:58359"/>
    </ligand>
</feature>
<feature type="binding site" evidence="1">
    <location>
        <position position="213"/>
    </location>
    <ligand>
        <name>L-glutamine</name>
        <dbReference type="ChEBI" id="CHEBI:58359"/>
    </ligand>
</feature>
<feature type="binding site" evidence="1">
    <location>
        <position position="232"/>
    </location>
    <ligand>
        <name>ATP</name>
        <dbReference type="ChEBI" id="CHEBI:30616"/>
    </ligand>
</feature>
<feature type="binding site" evidence="1">
    <location>
        <begin position="262"/>
        <end position="263"/>
    </location>
    <ligand>
        <name>ATP</name>
        <dbReference type="ChEBI" id="CHEBI:30616"/>
    </ligand>
</feature>
<feature type="binding site" evidence="1">
    <location>
        <begin position="270"/>
        <end position="272"/>
    </location>
    <ligand>
        <name>ATP</name>
        <dbReference type="ChEBI" id="CHEBI:30616"/>
    </ligand>
</feature>
<comment type="catalytic activity">
    <reaction evidence="1">
        <text>tRNA(Gln) + L-glutamine + ATP = L-glutaminyl-tRNA(Gln) + AMP + diphosphate</text>
        <dbReference type="Rhea" id="RHEA:20121"/>
        <dbReference type="Rhea" id="RHEA-COMP:9662"/>
        <dbReference type="Rhea" id="RHEA-COMP:9681"/>
        <dbReference type="ChEBI" id="CHEBI:30616"/>
        <dbReference type="ChEBI" id="CHEBI:33019"/>
        <dbReference type="ChEBI" id="CHEBI:58359"/>
        <dbReference type="ChEBI" id="CHEBI:78442"/>
        <dbReference type="ChEBI" id="CHEBI:78521"/>
        <dbReference type="ChEBI" id="CHEBI:456215"/>
        <dbReference type="EC" id="6.1.1.18"/>
    </reaction>
</comment>
<comment type="subunit">
    <text evidence="1">Monomer.</text>
</comment>
<comment type="subcellular location">
    <subcellularLocation>
        <location evidence="1">Cytoplasm</location>
    </subcellularLocation>
</comment>
<comment type="similarity">
    <text evidence="1">Belongs to the class-I aminoacyl-tRNA synthetase family.</text>
</comment>
<keyword id="KW-0030">Aminoacyl-tRNA synthetase</keyword>
<keyword id="KW-0067">ATP-binding</keyword>
<keyword id="KW-0963">Cytoplasm</keyword>
<keyword id="KW-0436">Ligase</keyword>
<keyword id="KW-0547">Nucleotide-binding</keyword>
<keyword id="KW-0648">Protein biosynthesis</keyword>
<keyword id="KW-1185">Reference proteome</keyword>
<accession>Q6LTD1</accession>
<proteinExistence type="inferred from homology"/>
<sequence>MMSESEARPTNFIRQIIDADLDSGKHKSVHTRFPPEPNGYLHIGHAKSICLNFGIAQDYQGQCNLRFDDTNPEKEDIEYVESIKNDVNWLGFDWSGEICYSSNYFDKLYGFAVELINKGLAYVDELSPEQMREYRGNLTEPGKPSPYRDRSVAENLELFEKMKNGEVEEGIMSLRAKIDMASSFMVLRDPVIYRVRFATHHQTGDKWCIYPMYDFTHCISDALEGITHSICTLEFQDNRRLYDWVLDNITIDCQPRQYEFSRLNLEYTVMSKRKLNQLVTDNLVSGWDDPRMPTVSGLRRRGFTSASIREFCKRIGVTKQENTIEMSSLESCIRDDLNENAPRAMAVLDPVKIVIENFTGDTEVLTVSNHPNNSEMGTREVPFTREIWIEREDFREEANKKYKRLVLGKEVRLRGAYVIKAERIEKDAEGNITTIFCSYDNETLGVNPSDGRKVKGVIHWVSADAGLPAEIRLYDRLFTVANPAAADDFVTVINPESLTVLNGFVEPSLKVAEAEKAFQFERIGYFCVDSKDSSAEKLVFNRTVGLRDTWAKMGE</sequence>
<gene>
    <name evidence="1" type="primary">glnS</name>
    <name type="ordered locus">PBPRA1034</name>
</gene>
<dbReference type="EC" id="6.1.1.18" evidence="1"/>
<dbReference type="EMBL" id="CR378666">
    <property type="protein sequence ID" value="CAG19445.1"/>
    <property type="molecule type" value="Genomic_DNA"/>
</dbReference>
<dbReference type="SMR" id="Q6LTD1"/>
<dbReference type="STRING" id="298386.PBPRA1034"/>
<dbReference type="KEGG" id="ppr:PBPRA1034"/>
<dbReference type="eggNOG" id="COG0008">
    <property type="taxonomic scope" value="Bacteria"/>
</dbReference>
<dbReference type="HOGENOM" id="CLU_001882_2_3_6"/>
<dbReference type="Proteomes" id="UP000000593">
    <property type="component" value="Chromosome 1"/>
</dbReference>
<dbReference type="GO" id="GO:0005829">
    <property type="term" value="C:cytosol"/>
    <property type="evidence" value="ECO:0007669"/>
    <property type="project" value="TreeGrafter"/>
</dbReference>
<dbReference type="GO" id="GO:0005524">
    <property type="term" value="F:ATP binding"/>
    <property type="evidence" value="ECO:0007669"/>
    <property type="project" value="UniProtKB-UniRule"/>
</dbReference>
<dbReference type="GO" id="GO:0004819">
    <property type="term" value="F:glutamine-tRNA ligase activity"/>
    <property type="evidence" value="ECO:0007669"/>
    <property type="project" value="UniProtKB-UniRule"/>
</dbReference>
<dbReference type="GO" id="GO:0006425">
    <property type="term" value="P:glutaminyl-tRNA aminoacylation"/>
    <property type="evidence" value="ECO:0007669"/>
    <property type="project" value="InterPro"/>
</dbReference>
<dbReference type="GO" id="GO:0006424">
    <property type="term" value="P:glutamyl-tRNA aminoacylation"/>
    <property type="evidence" value="ECO:0007669"/>
    <property type="project" value="UniProtKB-UniRule"/>
</dbReference>
<dbReference type="CDD" id="cd00807">
    <property type="entry name" value="GlnRS_core"/>
    <property type="match status" value="1"/>
</dbReference>
<dbReference type="FunFam" id="1.10.1160.10:FF:000001">
    <property type="entry name" value="Glutamine--tRNA ligase"/>
    <property type="match status" value="1"/>
</dbReference>
<dbReference type="FunFam" id="2.40.240.10:FF:000001">
    <property type="entry name" value="Glutamine--tRNA ligase"/>
    <property type="match status" value="1"/>
</dbReference>
<dbReference type="FunFam" id="2.40.240.10:FF:000003">
    <property type="entry name" value="Glutamine--tRNA ligase"/>
    <property type="match status" value="1"/>
</dbReference>
<dbReference type="FunFam" id="3.90.800.10:FF:000001">
    <property type="entry name" value="Glutamine--tRNA ligase"/>
    <property type="match status" value="1"/>
</dbReference>
<dbReference type="FunFam" id="3.40.50.620:FF:000037">
    <property type="entry name" value="Glutamine--tRNA ligase cytoplasmic"/>
    <property type="match status" value="1"/>
</dbReference>
<dbReference type="Gene3D" id="1.10.1160.10">
    <property type="entry name" value="Glutamyl-trna Synthetase, Domain 2"/>
    <property type="match status" value="1"/>
</dbReference>
<dbReference type="Gene3D" id="3.90.800.10">
    <property type="entry name" value="Glutamyl-tRNA Synthetase, Domain 3"/>
    <property type="match status" value="1"/>
</dbReference>
<dbReference type="Gene3D" id="3.40.50.620">
    <property type="entry name" value="HUPs"/>
    <property type="match status" value="1"/>
</dbReference>
<dbReference type="Gene3D" id="2.40.240.10">
    <property type="entry name" value="Ribosomal Protein L25, Chain P"/>
    <property type="match status" value="2"/>
</dbReference>
<dbReference type="HAMAP" id="MF_00126">
    <property type="entry name" value="Gln_tRNA_synth"/>
    <property type="match status" value="1"/>
</dbReference>
<dbReference type="InterPro" id="IPR001412">
    <property type="entry name" value="aa-tRNA-synth_I_CS"/>
</dbReference>
<dbReference type="InterPro" id="IPR004514">
    <property type="entry name" value="Gln-tRNA-synth"/>
</dbReference>
<dbReference type="InterPro" id="IPR050132">
    <property type="entry name" value="Gln/Glu-tRNA_Ligase"/>
</dbReference>
<dbReference type="InterPro" id="IPR022861">
    <property type="entry name" value="Gln_tRNA_ligase_bac"/>
</dbReference>
<dbReference type="InterPro" id="IPR000924">
    <property type="entry name" value="Glu/Gln-tRNA-synth"/>
</dbReference>
<dbReference type="InterPro" id="IPR020058">
    <property type="entry name" value="Glu/Gln-tRNA-synth_Ib_cat-dom"/>
</dbReference>
<dbReference type="InterPro" id="IPR020059">
    <property type="entry name" value="Glu/Gln-tRNA-synth_Ib_codon-bd"/>
</dbReference>
<dbReference type="InterPro" id="IPR020061">
    <property type="entry name" value="Glu_tRNA_lig_a-bdl"/>
</dbReference>
<dbReference type="InterPro" id="IPR020056">
    <property type="entry name" value="Rbsml_bL25/Gln-tRNA_synth_N"/>
</dbReference>
<dbReference type="InterPro" id="IPR011035">
    <property type="entry name" value="Ribosomal_bL25/Gln-tRNA_synth"/>
</dbReference>
<dbReference type="InterPro" id="IPR014729">
    <property type="entry name" value="Rossmann-like_a/b/a_fold"/>
</dbReference>
<dbReference type="InterPro" id="IPR049437">
    <property type="entry name" value="tRNA-synt_1c_C2"/>
</dbReference>
<dbReference type="NCBIfam" id="TIGR00440">
    <property type="entry name" value="glnS"/>
    <property type="match status" value="1"/>
</dbReference>
<dbReference type="NCBIfam" id="NF011291">
    <property type="entry name" value="PRK14703.1"/>
    <property type="match status" value="1"/>
</dbReference>
<dbReference type="PANTHER" id="PTHR43097:SF5">
    <property type="entry name" value="GLUTAMATE--TRNA LIGASE"/>
    <property type="match status" value="1"/>
</dbReference>
<dbReference type="PANTHER" id="PTHR43097">
    <property type="entry name" value="GLUTAMINE-TRNA LIGASE"/>
    <property type="match status" value="1"/>
</dbReference>
<dbReference type="Pfam" id="PF00749">
    <property type="entry name" value="tRNA-synt_1c"/>
    <property type="match status" value="1"/>
</dbReference>
<dbReference type="Pfam" id="PF03950">
    <property type="entry name" value="tRNA-synt_1c_C"/>
    <property type="match status" value="1"/>
</dbReference>
<dbReference type="Pfam" id="PF20974">
    <property type="entry name" value="tRNA-synt_1c_C2"/>
    <property type="match status" value="1"/>
</dbReference>
<dbReference type="PRINTS" id="PR00987">
    <property type="entry name" value="TRNASYNTHGLU"/>
</dbReference>
<dbReference type="SUPFAM" id="SSF52374">
    <property type="entry name" value="Nucleotidylyl transferase"/>
    <property type="match status" value="1"/>
</dbReference>
<dbReference type="SUPFAM" id="SSF50715">
    <property type="entry name" value="Ribosomal protein L25-like"/>
    <property type="match status" value="1"/>
</dbReference>
<dbReference type="PROSITE" id="PS00178">
    <property type="entry name" value="AA_TRNA_LIGASE_I"/>
    <property type="match status" value="1"/>
</dbReference>
<organism>
    <name type="scientific">Photobacterium profundum (strain SS9)</name>
    <dbReference type="NCBI Taxonomy" id="298386"/>
    <lineage>
        <taxon>Bacteria</taxon>
        <taxon>Pseudomonadati</taxon>
        <taxon>Pseudomonadota</taxon>
        <taxon>Gammaproteobacteria</taxon>
        <taxon>Vibrionales</taxon>
        <taxon>Vibrionaceae</taxon>
        <taxon>Photobacterium</taxon>
    </lineage>
</organism>